<organism>
    <name type="scientific">Escherichia coli (strain ATCC 8739 / DSM 1576 / NBRC 3972 / NCIMB 8545 / WDCM 00012 / Crooks)</name>
    <dbReference type="NCBI Taxonomy" id="481805"/>
    <lineage>
        <taxon>Bacteria</taxon>
        <taxon>Pseudomonadati</taxon>
        <taxon>Pseudomonadota</taxon>
        <taxon>Gammaproteobacteria</taxon>
        <taxon>Enterobacterales</taxon>
        <taxon>Enterobacteriaceae</taxon>
        <taxon>Escherichia</taxon>
    </lineage>
</organism>
<keyword id="KW-0028">Amino-acid biosynthesis</keyword>
<keyword id="KW-0378">Hydrolase</keyword>
<keyword id="KW-0486">Methionine biosynthesis</keyword>
<protein>
    <recommendedName>
        <fullName evidence="1">5'-methylthioadenosine/S-adenosylhomocysteine nucleosidase</fullName>
        <shortName evidence="1">MTA/SAH nucleosidase</shortName>
        <shortName evidence="1">MTAN</shortName>
        <ecNumber evidence="1">3.2.2.9</ecNumber>
    </recommendedName>
    <alternativeName>
        <fullName evidence="1">5'-deoxyadenosine nucleosidase</fullName>
        <shortName evidence="1">DOA nucleosidase</shortName>
        <shortName evidence="1">dAdo nucleosidase</shortName>
    </alternativeName>
    <alternativeName>
        <fullName evidence="1">5'-methylthioadenosine nucleosidase</fullName>
        <shortName evidence="1">MTA nucleosidase</shortName>
    </alternativeName>
    <alternativeName>
        <fullName evidence="1">S-adenosylhomocysteine nucleosidase</fullName>
        <shortName evidence="1">AdoHcy nucleosidase</shortName>
        <shortName evidence="1">SAH nucleosidase</shortName>
        <shortName evidence="1">SRH nucleosidase</shortName>
    </alternativeName>
</protein>
<accession>B1IQI1</accession>
<gene>
    <name evidence="1" type="primary">mtnN</name>
    <name type="ordered locus">EcolC_3500</name>
</gene>
<evidence type="ECO:0000255" key="1">
    <source>
        <dbReference type="HAMAP-Rule" id="MF_01684"/>
    </source>
</evidence>
<reference key="1">
    <citation type="submission" date="2008-02" db="EMBL/GenBank/DDBJ databases">
        <title>Complete sequence of Escherichia coli C str. ATCC 8739.</title>
        <authorList>
            <person name="Copeland A."/>
            <person name="Lucas S."/>
            <person name="Lapidus A."/>
            <person name="Glavina del Rio T."/>
            <person name="Dalin E."/>
            <person name="Tice H."/>
            <person name="Bruce D."/>
            <person name="Goodwin L."/>
            <person name="Pitluck S."/>
            <person name="Kiss H."/>
            <person name="Brettin T."/>
            <person name="Detter J.C."/>
            <person name="Han C."/>
            <person name="Kuske C.R."/>
            <person name="Schmutz J."/>
            <person name="Larimer F."/>
            <person name="Land M."/>
            <person name="Hauser L."/>
            <person name="Kyrpides N."/>
            <person name="Mikhailova N."/>
            <person name="Ingram L."/>
            <person name="Richardson P."/>
        </authorList>
    </citation>
    <scope>NUCLEOTIDE SEQUENCE [LARGE SCALE GENOMIC DNA]</scope>
    <source>
        <strain>ATCC 8739 / DSM 1576 / NBRC 3972 / NCIMB 8545 / WDCM 00012 / Crooks</strain>
    </source>
</reference>
<name>MTNN_ECOLC</name>
<dbReference type="EC" id="3.2.2.9" evidence="1"/>
<dbReference type="EMBL" id="CP000946">
    <property type="protein sequence ID" value="ACA79114.1"/>
    <property type="molecule type" value="Genomic_DNA"/>
</dbReference>
<dbReference type="RefSeq" id="WP_000689844.1">
    <property type="nucleotide sequence ID" value="NZ_MTFT01000035.1"/>
</dbReference>
<dbReference type="SMR" id="B1IQI1"/>
<dbReference type="GeneID" id="93777267"/>
<dbReference type="KEGG" id="ecl:EcolC_3500"/>
<dbReference type="HOGENOM" id="CLU_031248_2_2_6"/>
<dbReference type="UniPathway" id="UPA00904">
    <property type="reaction ID" value="UER00871"/>
</dbReference>
<dbReference type="GO" id="GO:0005829">
    <property type="term" value="C:cytosol"/>
    <property type="evidence" value="ECO:0007669"/>
    <property type="project" value="TreeGrafter"/>
</dbReference>
<dbReference type="GO" id="GO:0008782">
    <property type="term" value="F:adenosylhomocysteine nucleosidase activity"/>
    <property type="evidence" value="ECO:0007669"/>
    <property type="project" value="UniProtKB-UniRule"/>
</dbReference>
<dbReference type="GO" id="GO:0008930">
    <property type="term" value="F:methylthioadenosine nucleosidase activity"/>
    <property type="evidence" value="ECO:0007669"/>
    <property type="project" value="UniProtKB-UniRule"/>
</dbReference>
<dbReference type="GO" id="GO:0019509">
    <property type="term" value="P:L-methionine salvage from methylthioadenosine"/>
    <property type="evidence" value="ECO:0007669"/>
    <property type="project" value="UniProtKB-UniRule"/>
</dbReference>
<dbReference type="GO" id="GO:0019284">
    <property type="term" value="P:L-methionine salvage from S-adenosylmethionine"/>
    <property type="evidence" value="ECO:0007669"/>
    <property type="project" value="TreeGrafter"/>
</dbReference>
<dbReference type="GO" id="GO:0046124">
    <property type="term" value="P:purine deoxyribonucleoside catabolic process"/>
    <property type="evidence" value="ECO:0007669"/>
    <property type="project" value="UniProtKB-UniRule"/>
</dbReference>
<dbReference type="CDD" id="cd09008">
    <property type="entry name" value="MTAN"/>
    <property type="match status" value="1"/>
</dbReference>
<dbReference type="FunFam" id="3.40.50.1580:FF:000001">
    <property type="entry name" value="MTA/SAH nucleosidase family protein"/>
    <property type="match status" value="1"/>
</dbReference>
<dbReference type="Gene3D" id="3.40.50.1580">
    <property type="entry name" value="Nucleoside phosphorylase domain"/>
    <property type="match status" value="1"/>
</dbReference>
<dbReference type="HAMAP" id="MF_01684">
    <property type="entry name" value="Salvage_MtnN"/>
    <property type="match status" value="1"/>
</dbReference>
<dbReference type="InterPro" id="IPR010049">
    <property type="entry name" value="MTA_SAH_Nsdase"/>
</dbReference>
<dbReference type="InterPro" id="IPR000845">
    <property type="entry name" value="Nucleoside_phosphorylase_d"/>
</dbReference>
<dbReference type="InterPro" id="IPR035994">
    <property type="entry name" value="Nucleoside_phosphorylase_sf"/>
</dbReference>
<dbReference type="NCBIfam" id="TIGR01704">
    <property type="entry name" value="MTA_SAH-Nsdase"/>
    <property type="match status" value="1"/>
</dbReference>
<dbReference type="NCBIfam" id="NF004079">
    <property type="entry name" value="PRK05584.1"/>
    <property type="match status" value="1"/>
</dbReference>
<dbReference type="PANTHER" id="PTHR46832">
    <property type="entry name" value="5'-METHYLTHIOADENOSINE/S-ADENOSYLHOMOCYSTEINE NUCLEOSIDASE"/>
    <property type="match status" value="1"/>
</dbReference>
<dbReference type="PANTHER" id="PTHR46832:SF1">
    <property type="entry name" value="5'-METHYLTHIOADENOSINE_S-ADENOSYLHOMOCYSTEINE NUCLEOSIDASE"/>
    <property type="match status" value="1"/>
</dbReference>
<dbReference type="Pfam" id="PF01048">
    <property type="entry name" value="PNP_UDP_1"/>
    <property type="match status" value="1"/>
</dbReference>
<dbReference type="SUPFAM" id="SSF53167">
    <property type="entry name" value="Purine and uridine phosphorylases"/>
    <property type="match status" value="1"/>
</dbReference>
<sequence length="232" mass="24354">MKIGIIGAMEEEVTLLRDKIENRQTISLGGCEIYTGQLNGTEVALLKSGIGKVAAALGATLLLEHCKPDVIINTGSAGGLAPTLKVGDIVVSDEARYHDADVTAFGYEYGQLPGCPAGFKADDKLIAAAEACIAELNLNAVRGLIVSGDAFINGSVGLAKIRHNFPQAIAVEMEATAIAHVCHNFNVPFVVVRAISDVADQQSHLSFDEFLAVAAKQSSLMVESLVQKLAHG</sequence>
<comment type="function">
    <text evidence="1">Catalyzes the irreversible cleavage of the glycosidic bond in both 5'-methylthioadenosine (MTA) and S-adenosylhomocysteine (SAH/AdoHcy) to adenine and the corresponding thioribose, 5'-methylthioribose and S-ribosylhomocysteine, respectively. Also cleaves 5'-deoxyadenosine, a toxic by-product of radical S-adenosylmethionine (SAM) enzymes, into 5-deoxyribose and adenine. Thus, is required for in vivo function of the radical SAM enzymes biotin synthase and lipoic acid synthase, that are inhibited by 5'-deoxyadenosine accumulation.</text>
</comment>
<comment type="catalytic activity">
    <reaction evidence="1">
        <text>S-adenosyl-L-homocysteine + H2O = S-(5-deoxy-D-ribos-5-yl)-L-homocysteine + adenine</text>
        <dbReference type="Rhea" id="RHEA:17805"/>
        <dbReference type="ChEBI" id="CHEBI:15377"/>
        <dbReference type="ChEBI" id="CHEBI:16708"/>
        <dbReference type="ChEBI" id="CHEBI:57856"/>
        <dbReference type="ChEBI" id="CHEBI:58195"/>
        <dbReference type="EC" id="3.2.2.9"/>
    </reaction>
</comment>
<comment type="catalytic activity">
    <reaction evidence="1">
        <text>S-methyl-5'-thioadenosine + H2O = 5-(methylsulfanyl)-D-ribose + adenine</text>
        <dbReference type="Rhea" id="RHEA:13617"/>
        <dbReference type="ChEBI" id="CHEBI:15377"/>
        <dbReference type="ChEBI" id="CHEBI:16708"/>
        <dbReference type="ChEBI" id="CHEBI:17509"/>
        <dbReference type="ChEBI" id="CHEBI:78440"/>
        <dbReference type="EC" id="3.2.2.9"/>
    </reaction>
</comment>
<comment type="catalytic activity">
    <reaction evidence="1">
        <text>5'-deoxyadenosine + H2O = 5-deoxy-D-ribose + adenine</text>
        <dbReference type="Rhea" id="RHEA:29859"/>
        <dbReference type="ChEBI" id="CHEBI:15377"/>
        <dbReference type="ChEBI" id="CHEBI:16708"/>
        <dbReference type="ChEBI" id="CHEBI:17319"/>
        <dbReference type="ChEBI" id="CHEBI:149540"/>
        <dbReference type="EC" id="3.2.2.9"/>
    </reaction>
    <physiologicalReaction direction="left-to-right" evidence="1">
        <dbReference type="Rhea" id="RHEA:29860"/>
    </physiologicalReaction>
</comment>
<comment type="pathway">
    <text evidence="1">Amino-acid biosynthesis; L-methionine biosynthesis via salvage pathway; S-methyl-5-thio-alpha-D-ribose 1-phosphate from S-methyl-5'-thioadenosine (hydrolase route): step 1/2.</text>
</comment>
<comment type="subunit">
    <text evidence="1">Homodimer.</text>
</comment>
<comment type="similarity">
    <text evidence="1">Belongs to the PNP/UDP phosphorylase family. MtnN subfamily.</text>
</comment>
<proteinExistence type="inferred from homology"/>
<feature type="chain" id="PRO_0000359293" description="5'-methylthioadenosine/S-adenosylhomocysteine nucleosidase">
    <location>
        <begin position="1"/>
        <end position="232"/>
    </location>
</feature>
<feature type="active site" description="Proton acceptor" evidence="1">
    <location>
        <position position="12"/>
    </location>
</feature>
<feature type="active site" description="Proton donor" evidence="1">
    <location>
        <position position="197"/>
    </location>
</feature>
<feature type="binding site" evidence="1">
    <location>
        <position position="78"/>
    </location>
    <ligand>
        <name>substrate</name>
    </ligand>
</feature>
<feature type="binding site" evidence="1">
    <location>
        <position position="152"/>
    </location>
    <ligand>
        <name>substrate</name>
    </ligand>
</feature>
<feature type="binding site" evidence="1">
    <location>
        <begin position="173"/>
        <end position="174"/>
    </location>
    <ligand>
        <name>substrate</name>
    </ligand>
</feature>